<name>Y908_FRATO</name>
<evidence type="ECO:0000255" key="1">
    <source>
        <dbReference type="HAMAP-Rule" id="MF_00693"/>
    </source>
</evidence>
<sequence length="248" mass="26875">MAGHSKWANIKHKKAKEDAKRGKIFTKLIREITVAARLGGGDKDANPRLRAAIATALANNMSKDTIERAIVKGAGGDESANVEEVRYEGYGPGGVAIIVDCMTDNRNRTVGEVRHAFTKSGGNLGTDGSVAYMFTKRGIISFAPGVDEDALMEVALEAGAEDIITHEDGSIDVYTDPHDFSDIQEVLIEKGFNSENAEVTFDAETKAELDTETAEKVMALIDKLEDLDYVQSVYSNANFTQELIEQIG</sequence>
<feature type="chain" id="PRO_1000045311" description="Probable transcriptional regulatory protein FTH_0908">
    <location>
        <begin position="1"/>
        <end position="248"/>
    </location>
</feature>
<comment type="subcellular location">
    <subcellularLocation>
        <location evidence="1">Cytoplasm</location>
    </subcellularLocation>
</comment>
<comment type="similarity">
    <text evidence="1">Belongs to the TACO1 family.</text>
</comment>
<organism>
    <name type="scientific">Francisella tularensis subsp. holarctica (strain OSU18)</name>
    <dbReference type="NCBI Taxonomy" id="393011"/>
    <lineage>
        <taxon>Bacteria</taxon>
        <taxon>Pseudomonadati</taxon>
        <taxon>Pseudomonadota</taxon>
        <taxon>Gammaproteobacteria</taxon>
        <taxon>Thiotrichales</taxon>
        <taxon>Francisellaceae</taxon>
        <taxon>Francisella</taxon>
    </lineage>
</organism>
<keyword id="KW-0963">Cytoplasm</keyword>
<keyword id="KW-0238">DNA-binding</keyword>
<keyword id="KW-0804">Transcription</keyword>
<keyword id="KW-0805">Transcription regulation</keyword>
<accession>Q0BM66</accession>
<dbReference type="EMBL" id="CP000437">
    <property type="protein sequence ID" value="ABI82818.1"/>
    <property type="molecule type" value="Genomic_DNA"/>
</dbReference>
<dbReference type="RefSeq" id="WP_003015700.1">
    <property type="nucleotide sequence ID" value="NC_017463.1"/>
</dbReference>
<dbReference type="SMR" id="Q0BM66"/>
<dbReference type="KEGG" id="fth:FTH_0908"/>
<dbReference type="GO" id="GO:0005829">
    <property type="term" value="C:cytosol"/>
    <property type="evidence" value="ECO:0007669"/>
    <property type="project" value="TreeGrafter"/>
</dbReference>
<dbReference type="GO" id="GO:0003677">
    <property type="term" value="F:DNA binding"/>
    <property type="evidence" value="ECO:0007669"/>
    <property type="project" value="UniProtKB-UniRule"/>
</dbReference>
<dbReference type="GO" id="GO:0006355">
    <property type="term" value="P:regulation of DNA-templated transcription"/>
    <property type="evidence" value="ECO:0007669"/>
    <property type="project" value="UniProtKB-UniRule"/>
</dbReference>
<dbReference type="FunFam" id="1.10.10.200:FF:000001">
    <property type="entry name" value="Probable transcriptional regulatory protein YebC"/>
    <property type="match status" value="1"/>
</dbReference>
<dbReference type="FunFam" id="3.30.70.980:FF:000002">
    <property type="entry name" value="Probable transcriptional regulatory protein YebC"/>
    <property type="match status" value="1"/>
</dbReference>
<dbReference type="Gene3D" id="1.10.10.200">
    <property type="match status" value="1"/>
</dbReference>
<dbReference type="Gene3D" id="3.30.70.980">
    <property type="match status" value="2"/>
</dbReference>
<dbReference type="HAMAP" id="MF_00693">
    <property type="entry name" value="Transcrip_reg_TACO1"/>
    <property type="match status" value="1"/>
</dbReference>
<dbReference type="InterPro" id="IPR017856">
    <property type="entry name" value="Integrase-like_N"/>
</dbReference>
<dbReference type="InterPro" id="IPR048300">
    <property type="entry name" value="TACO1_YebC-like_2nd/3rd_dom"/>
</dbReference>
<dbReference type="InterPro" id="IPR049083">
    <property type="entry name" value="TACO1_YebC_N"/>
</dbReference>
<dbReference type="InterPro" id="IPR002876">
    <property type="entry name" value="Transcrip_reg_TACO1-like"/>
</dbReference>
<dbReference type="InterPro" id="IPR026564">
    <property type="entry name" value="Transcrip_reg_TACO1-like_dom3"/>
</dbReference>
<dbReference type="InterPro" id="IPR029072">
    <property type="entry name" value="YebC-like"/>
</dbReference>
<dbReference type="NCBIfam" id="NF001030">
    <property type="entry name" value="PRK00110.1"/>
    <property type="match status" value="1"/>
</dbReference>
<dbReference type="NCBIfam" id="NF009044">
    <property type="entry name" value="PRK12378.1"/>
    <property type="match status" value="1"/>
</dbReference>
<dbReference type="NCBIfam" id="TIGR01033">
    <property type="entry name" value="YebC/PmpR family DNA-binding transcriptional regulator"/>
    <property type="match status" value="1"/>
</dbReference>
<dbReference type="PANTHER" id="PTHR12532:SF6">
    <property type="entry name" value="TRANSCRIPTIONAL REGULATORY PROTEIN YEBC-RELATED"/>
    <property type="match status" value="1"/>
</dbReference>
<dbReference type="PANTHER" id="PTHR12532">
    <property type="entry name" value="TRANSLATIONAL ACTIVATOR OF CYTOCHROME C OXIDASE 1"/>
    <property type="match status" value="1"/>
</dbReference>
<dbReference type="Pfam" id="PF20772">
    <property type="entry name" value="TACO1_YebC_N"/>
    <property type="match status" value="1"/>
</dbReference>
<dbReference type="Pfam" id="PF01709">
    <property type="entry name" value="Transcrip_reg"/>
    <property type="match status" value="1"/>
</dbReference>
<dbReference type="SUPFAM" id="SSF75625">
    <property type="entry name" value="YebC-like"/>
    <property type="match status" value="1"/>
</dbReference>
<gene>
    <name type="ordered locus">FTH_0908</name>
</gene>
<reference key="1">
    <citation type="journal article" date="2006" name="J. Bacteriol.">
        <title>Chromosome rearrangement and diversification of Francisella tularensis revealed by the type B (OSU18) genome sequence.</title>
        <authorList>
            <person name="Petrosino J.F."/>
            <person name="Xiang Q."/>
            <person name="Karpathy S.E."/>
            <person name="Jiang H."/>
            <person name="Yerrapragada S."/>
            <person name="Liu Y."/>
            <person name="Gioia J."/>
            <person name="Hemphill L."/>
            <person name="Gonzalez A."/>
            <person name="Raghavan T.M."/>
            <person name="Uzman A."/>
            <person name="Fox G.E."/>
            <person name="Highlander S."/>
            <person name="Reichard M."/>
            <person name="Morton R.J."/>
            <person name="Clinkenbeard K.D."/>
            <person name="Weinstock G.M."/>
        </authorList>
    </citation>
    <scope>NUCLEOTIDE SEQUENCE [LARGE SCALE GENOMIC DNA]</scope>
    <source>
        <strain>OSU18</strain>
    </source>
</reference>
<proteinExistence type="inferred from homology"/>
<protein>
    <recommendedName>
        <fullName evidence="1">Probable transcriptional regulatory protein FTH_0908</fullName>
    </recommendedName>
</protein>